<evidence type="ECO:0000255" key="1">
    <source>
        <dbReference type="HAMAP-Rule" id="MF_01546"/>
    </source>
</evidence>
<accession>B7NLG0</accession>
<reference key="1">
    <citation type="journal article" date="2009" name="PLoS Genet.">
        <title>Organised genome dynamics in the Escherichia coli species results in highly diverse adaptive paths.</title>
        <authorList>
            <person name="Touchon M."/>
            <person name="Hoede C."/>
            <person name="Tenaillon O."/>
            <person name="Barbe V."/>
            <person name="Baeriswyl S."/>
            <person name="Bidet P."/>
            <person name="Bingen E."/>
            <person name="Bonacorsi S."/>
            <person name="Bouchier C."/>
            <person name="Bouvet O."/>
            <person name="Calteau A."/>
            <person name="Chiapello H."/>
            <person name="Clermont O."/>
            <person name="Cruveiller S."/>
            <person name="Danchin A."/>
            <person name="Diard M."/>
            <person name="Dossat C."/>
            <person name="Karoui M.E."/>
            <person name="Frapy E."/>
            <person name="Garry L."/>
            <person name="Ghigo J.M."/>
            <person name="Gilles A.M."/>
            <person name="Johnson J."/>
            <person name="Le Bouguenec C."/>
            <person name="Lescat M."/>
            <person name="Mangenot S."/>
            <person name="Martinez-Jehanne V."/>
            <person name="Matic I."/>
            <person name="Nassif X."/>
            <person name="Oztas S."/>
            <person name="Petit M.A."/>
            <person name="Pichon C."/>
            <person name="Rouy Z."/>
            <person name="Ruf C.S."/>
            <person name="Schneider D."/>
            <person name="Tourret J."/>
            <person name="Vacherie B."/>
            <person name="Vallenet D."/>
            <person name="Medigue C."/>
            <person name="Rocha E.P.C."/>
            <person name="Denamur E."/>
        </authorList>
    </citation>
    <scope>NUCLEOTIDE SEQUENCE [LARGE SCALE GENOMIC DNA]</scope>
    <source>
        <strain>IAI39 / ExPEC</strain>
    </source>
</reference>
<comment type="subcellular location">
    <subcellularLocation>
        <location evidence="1">Cell membrane</location>
        <topology evidence="1">Multi-pass membrane protein</topology>
    </subcellularLocation>
</comment>
<comment type="induction">
    <text evidence="1">Positively coregulated with aaeA and aaeB by AaeR.</text>
</comment>
<comment type="similarity">
    <text evidence="1">Belongs to the AaeX family.</text>
</comment>
<sequence>MSLFPVIVVFGLSFPPIFFELLLSLAIFWLVRRVLVPTGIYDFVWHPALFNTALYCCLFYLISRLFV</sequence>
<keyword id="KW-1003">Cell membrane</keyword>
<keyword id="KW-0472">Membrane</keyword>
<keyword id="KW-0812">Transmembrane</keyword>
<keyword id="KW-1133">Transmembrane helix</keyword>
<organism>
    <name type="scientific">Escherichia coli O7:K1 (strain IAI39 / ExPEC)</name>
    <dbReference type="NCBI Taxonomy" id="585057"/>
    <lineage>
        <taxon>Bacteria</taxon>
        <taxon>Pseudomonadati</taxon>
        <taxon>Pseudomonadota</taxon>
        <taxon>Gammaproteobacteria</taxon>
        <taxon>Enterobacterales</taxon>
        <taxon>Enterobacteriaceae</taxon>
        <taxon>Escherichia</taxon>
    </lineage>
</organism>
<protein>
    <recommendedName>
        <fullName evidence="1">Protein AaeX</fullName>
    </recommendedName>
</protein>
<name>AAEX_ECO7I</name>
<gene>
    <name evidence="1" type="primary">aaeX</name>
    <name type="ordered locus">ECIAI39_3733</name>
</gene>
<dbReference type="EMBL" id="CU928164">
    <property type="protein sequence ID" value="CAR19849.1"/>
    <property type="molecule type" value="Genomic_DNA"/>
</dbReference>
<dbReference type="RefSeq" id="WP_000051841.1">
    <property type="nucleotide sequence ID" value="NC_011750.1"/>
</dbReference>
<dbReference type="RefSeq" id="YP_002409636.1">
    <property type="nucleotide sequence ID" value="NC_011750.1"/>
</dbReference>
<dbReference type="STRING" id="585057.ECIAI39_3733"/>
<dbReference type="GeneID" id="93778743"/>
<dbReference type="KEGG" id="ect:ECIAI39_3733"/>
<dbReference type="PATRIC" id="fig|585057.6.peg.3869"/>
<dbReference type="HOGENOM" id="CLU_188292_0_0_6"/>
<dbReference type="Proteomes" id="UP000000749">
    <property type="component" value="Chromosome"/>
</dbReference>
<dbReference type="GO" id="GO:0005886">
    <property type="term" value="C:plasma membrane"/>
    <property type="evidence" value="ECO:0007669"/>
    <property type="project" value="UniProtKB-SubCell"/>
</dbReference>
<dbReference type="HAMAP" id="MF_01546">
    <property type="entry name" value="AaeX"/>
    <property type="match status" value="1"/>
</dbReference>
<dbReference type="InterPro" id="IPR012451">
    <property type="entry name" value="DUF1656"/>
</dbReference>
<dbReference type="NCBIfam" id="NF008615">
    <property type="entry name" value="PRK11594.1"/>
    <property type="match status" value="1"/>
</dbReference>
<dbReference type="Pfam" id="PF07869">
    <property type="entry name" value="DUF1656"/>
    <property type="match status" value="1"/>
</dbReference>
<feature type="chain" id="PRO_1000146753" description="Protein AaeX">
    <location>
        <begin position="1"/>
        <end position="67"/>
    </location>
</feature>
<feature type="transmembrane region" description="Helical" evidence="1">
    <location>
        <begin position="3"/>
        <end position="23"/>
    </location>
</feature>
<feature type="transmembrane region" description="Helical" evidence="1">
    <location>
        <begin position="43"/>
        <end position="63"/>
    </location>
</feature>
<proteinExistence type="inferred from homology"/>